<dbReference type="EC" id="7.5.2.10" evidence="1"/>
<dbReference type="EMBL" id="CP000058">
    <property type="protein sequence ID" value="AAZ37508.1"/>
    <property type="molecule type" value="Genomic_DNA"/>
</dbReference>
<dbReference type="RefSeq" id="WP_011168524.1">
    <property type="nucleotide sequence ID" value="NC_005773.3"/>
</dbReference>
<dbReference type="SMR" id="Q48J74"/>
<dbReference type="KEGG" id="psp:PSPPH_2354"/>
<dbReference type="eggNOG" id="COG1129">
    <property type="taxonomic scope" value="Bacteria"/>
</dbReference>
<dbReference type="HOGENOM" id="CLU_000604_92_3_6"/>
<dbReference type="Proteomes" id="UP000000551">
    <property type="component" value="Chromosome"/>
</dbReference>
<dbReference type="GO" id="GO:0005886">
    <property type="term" value="C:plasma membrane"/>
    <property type="evidence" value="ECO:0007669"/>
    <property type="project" value="UniProtKB-SubCell"/>
</dbReference>
<dbReference type="GO" id="GO:0015614">
    <property type="term" value="F:ABC-type D-xylose transporter activity"/>
    <property type="evidence" value="ECO:0007669"/>
    <property type="project" value="UniProtKB-EC"/>
</dbReference>
<dbReference type="GO" id="GO:0005524">
    <property type="term" value="F:ATP binding"/>
    <property type="evidence" value="ECO:0007669"/>
    <property type="project" value="UniProtKB-KW"/>
</dbReference>
<dbReference type="GO" id="GO:0016887">
    <property type="term" value="F:ATP hydrolysis activity"/>
    <property type="evidence" value="ECO:0007669"/>
    <property type="project" value="InterPro"/>
</dbReference>
<dbReference type="CDD" id="cd03216">
    <property type="entry name" value="ABC_Carb_Monos_I"/>
    <property type="match status" value="1"/>
</dbReference>
<dbReference type="CDD" id="cd03215">
    <property type="entry name" value="ABC_Carb_Monos_II"/>
    <property type="match status" value="1"/>
</dbReference>
<dbReference type="Gene3D" id="3.40.50.300">
    <property type="entry name" value="P-loop containing nucleotide triphosphate hydrolases"/>
    <property type="match status" value="2"/>
</dbReference>
<dbReference type="InterPro" id="IPR003593">
    <property type="entry name" value="AAA+_ATPase"/>
</dbReference>
<dbReference type="InterPro" id="IPR050107">
    <property type="entry name" value="ABC_carbohydrate_import_ATPase"/>
</dbReference>
<dbReference type="InterPro" id="IPR003439">
    <property type="entry name" value="ABC_transporter-like_ATP-bd"/>
</dbReference>
<dbReference type="InterPro" id="IPR017871">
    <property type="entry name" value="ABC_transporter-like_CS"/>
</dbReference>
<dbReference type="InterPro" id="IPR013455">
    <property type="entry name" value="ABC_transptr_XylG"/>
</dbReference>
<dbReference type="InterPro" id="IPR027417">
    <property type="entry name" value="P-loop_NTPase"/>
</dbReference>
<dbReference type="NCBIfam" id="NF010069">
    <property type="entry name" value="PRK13549.1"/>
    <property type="match status" value="1"/>
</dbReference>
<dbReference type="NCBIfam" id="TIGR02633">
    <property type="entry name" value="xylG"/>
    <property type="match status" value="1"/>
</dbReference>
<dbReference type="PANTHER" id="PTHR43790">
    <property type="entry name" value="CARBOHYDRATE TRANSPORT ATP-BINDING PROTEIN MG119-RELATED"/>
    <property type="match status" value="1"/>
</dbReference>
<dbReference type="PANTHER" id="PTHR43790:SF1">
    <property type="entry name" value="XYLOSE IMPORT ATP-BINDING PROTEIN XYLG"/>
    <property type="match status" value="1"/>
</dbReference>
<dbReference type="Pfam" id="PF00005">
    <property type="entry name" value="ABC_tran"/>
    <property type="match status" value="2"/>
</dbReference>
<dbReference type="SMART" id="SM00382">
    <property type="entry name" value="AAA"/>
    <property type="match status" value="2"/>
</dbReference>
<dbReference type="SUPFAM" id="SSF52540">
    <property type="entry name" value="P-loop containing nucleoside triphosphate hydrolases"/>
    <property type="match status" value="2"/>
</dbReference>
<dbReference type="PROSITE" id="PS00211">
    <property type="entry name" value="ABC_TRANSPORTER_1"/>
    <property type="match status" value="1"/>
</dbReference>
<dbReference type="PROSITE" id="PS50893">
    <property type="entry name" value="ABC_TRANSPORTER_2"/>
    <property type="match status" value="2"/>
</dbReference>
<dbReference type="PROSITE" id="PS51280">
    <property type="entry name" value="XYLG"/>
    <property type="match status" value="1"/>
</dbReference>
<evidence type="ECO:0000255" key="1">
    <source>
        <dbReference type="HAMAP-Rule" id="MF_01722"/>
    </source>
</evidence>
<keyword id="KW-0067">ATP-binding</keyword>
<keyword id="KW-0997">Cell inner membrane</keyword>
<keyword id="KW-1003">Cell membrane</keyword>
<keyword id="KW-0472">Membrane</keyword>
<keyword id="KW-0547">Nucleotide-binding</keyword>
<keyword id="KW-0677">Repeat</keyword>
<keyword id="KW-0762">Sugar transport</keyword>
<keyword id="KW-1278">Translocase</keyword>
<keyword id="KW-0813">Transport</keyword>
<gene>
    <name evidence="1" type="primary">xylG</name>
    <name type="ordered locus">PSPPH_2354</name>
</gene>
<reference key="1">
    <citation type="journal article" date="2005" name="J. Bacteriol.">
        <title>Whole-genome sequence analysis of Pseudomonas syringae pv. phaseolicola 1448A reveals divergence among pathovars in genes involved in virulence and transposition.</title>
        <authorList>
            <person name="Joardar V."/>
            <person name="Lindeberg M."/>
            <person name="Jackson R.W."/>
            <person name="Selengut J."/>
            <person name="Dodson R."/>
            <person name="Brinkac L.M."/>
            <person name="Daugherty S.C."/>
            <person name="DeBoy R.T."/>
            <person name="Durkin A.S."/>
            <person name="Gwinn Giglio M."/>
            <person name="Madupu R."/>
            <person name="Nelson W.C."/>
            <person name="Rosovitz M.J."/>
            <person name="Sullivan S.A."/>
            <person name="Crabtree J."/>
            <person name="Creasy T."/>
            <person name="Davidsen T.M."/>
            <person name="Haft D.H."/>
            <person name="Zafar N."/>
            <person name="Zhou L."/>
            <person name="Halpin R."/>
            <person name="Holley T."/>
            <person name="Khouri H.M."/>
            <person name="Feldblyum T.V."/>
            <person name="White O."/>
            <person name="Fraser C.M."/>
            <person name="Chatterjee A.K."/>
            <person name="Cartinhour S."/>
            <person name="Schneider D."/>
            <person name="Mansfield J.W."/>
            <person name="Collmer A."/>
            <person name="Buell R."/>
        </authorList>
    </citation>
    <scope>NUCLEOTIDE SEQUENCE [LARGE SCALE GENOMIC DNA]</scope>
    <source>
        <strain>1448A / Race 6</strain>
    </source>
</reference>
<feature type="chain" id="PRO_0000271510" description="Xylose import ATP-binding protein XylG">
    <location>
        <begin position="1"/>
        <end position="518"/>
    </location>
</feature>
<feature type="domain" description="ABC transporter 1" evidence="1">
    <location>
        <begin position="6"/>
        <end position="245"/>
    </location>
</feature>
<feature type="domain" description="ABC transporter 2" evidence="1">
    <location>
        <begin position="262"/>
        <end position="507"/>
    </location>
</feature>
<feature type="binding site" evidence="1">
    <location>
        <begin position="38"/>
        <end position="45"/>
    </location>
    <ligand>
        <name>ATP</name>
        <dbReference type="ChEBI" id="CHEBI:30616"/>
    </ligand>
</feature>
<comment type="function">
    <text evidence="1">Part of the ABC transporter complex XylFGH involved in xylose import. Responsible for energy coupling to the transport system.</text>
</comment>
<comment type="catalytic activity">
    <reaction evidence="1">
        <text>D-xylose(out) + ATP + H2O = D-xylose(in) + ADP + phosphate + H(+)</text>
        <dbReference type="Rhea" id="RHEA:29899"/>
        <dbReference type="ChEBI" id="CHEBI:15377"/>
        <dbReference type="ChEBI" id="CHEBI:15378"/>
        <dbReference type="ChEBI" id="CHEBI:30616"/>
        <dbReference type="ChEBI" id="CHEBI:43474"/>
        <dbReference type="ChEBI" id="CHEBI:53455"/>
        <dbReference type="ChEBI" id="CHEBI:456216"/>
        <dbReference type="EC" id="7.5.2.10"/>
    </reaction>
</comment>
<comment type="subunit">
    <text evidence="1">The complex is composed of two ATP-binding proteins (XylG), two transmembrane proteins (XylH) and a solute-binding protein (XylF).</text>
</comment>
<comment type="subcellular location">
    <subcellularLocation>
        <location evidence="1">Cell inner membrane</location>
        <topology evidence="1">Peripheral membrane protein</topology>
    </subcellularLocation>
</comment>
<comment type="similarity">
    <text evidence="1">Belongs to the ABC transporter superfamily. Xylose importer (TC 3.A.1.2.4) family.</text>
</comment>
<accession>Q48J74</accession>
<sequence length="518" mass="56238">MSDYLLQMNGIVKTFDGVKALNGIDIKVRPGECVGLCGENGTGKSTLMKVLSAVYPYGTWDGEILWDGTPLKAQSISETEAAGIVIIHQELTLVPDLSVAENIFMGHELTLPGGRMNYPAMIHRAEVLMRELKVPDMNVALPVSQYGGGYQQLVEIAKALNKKARLLILDEPSSALTRSEIEVLLDIIRDLKAKGVACVYISHKLDEVAAVCDTISVIRDGKHIATTAMSDMDIPKIITQMVGREMSNLYPTEPHEIGEVIFEARNITCYDVDNPGRKRVDDISFALKRGEILGIAGLVGAGRTELVSALFGAYPGRYTGEVWLDGQPVDTRTPLKSIRAGLCMVPEDRKRQGIIPDLGVGQNITLAVLDTYSKMTRIDAEAELGSIDREISRMHLKTASPFLPITSLSGGNQQKAVLAKMLLTRPRVLILDEPTRGVDVGAKYEIYKLMGALAAEGVSIIMVSSELAEVLGVSDRVLVIGEGQLRGDFINHELTQEQVLAAALSHPDAPDNNARKTA</sequence>
<protein>
    <recommendedName>
        <fullName evidence="1">Xylose import ATP-binding protein XylG</fullName>
        <ecNumber evidence="1">7.5.2.10</ecNumber>
    </recommendedName>
</protein>
<proteinExistence type="inferred from homology"/>
<organism>
    <name type="scientific">Pseudomonas savastanoi pv. phaseolicola (strain 1448A / Race 6)</name>
    <name type="common">Pseudomonas syringae pv. phaseolicola (strain 1448A / Race 6)</name>
    <dbReference type="NCBI Taxonomy" id="264730"/>
    <lineage>
        <taxon>Bacteria</taxon>
        <taxon>Pseudomonadati</taxon>
        <taxon>Pseudomonadota</taxon>
        <taxon>Gammaproteobacteria</taxon>
        <taxon>Pseudomonadales</taxon>
        <taxon>Pseudomonadaceae</taxon>
        <taxon>Pseudomonas</taxon>
    </lineage>
</organism>
<name>XYLG_PSE14</name>